<organism>
    <name type="scientific">Mus musculus</name>
    <name type="common">Mouse</name>
    <dbReference type="NCBI Taxonomy" id="10090"/>
    <lineage>
        <taxon>Eukaryota</taxon>
        <taxon>Metazoa</taxon>
        <taxon>Chordata</taxon>
        <taxon>Craniata</taxon>
        <taxon>Vertebrata</taxon>
        <taxon>Euteleostomi</taxon>
        <taxon>Mammalia</taxon>
        <taxon>Eutheria</taxon>
        <taxon>Euarchontoglires</taxon>
        <taxon>Glires</taxon>
        <taxon>Rodentia</taxon>
        <taxon>Myomorpha</taxon>
        <taxon>Muroidea</taxon>
        <taxon>Muridae</taxon>
        <taxon>Murinae</taxon>
        <taxon>Mus</taxon>
        <taxon>Mus</taxon>
    </lineage>
</organism>
<gene>
    <name type="primary">Trmt5</name>
    <name type="synonym">Kiaa1393</name>
    <name type="synonym">Trm5</name>
</gene>
<accession>Q9D0C4</accession>
<accession>Q5DTY1</accession>
<protein>
    <recommendedName>
        <fullName evidence="2">tRNA (guanine(37)-N(1))-methyltransferase</fullName>
        <ecNumber evidence="2">2.1.1.228</ecNumber>
    </recommendedName>
    <alternativeName>
        <fullName evidence="2">M1G-methyltransferase</fullName>
    </alternativeName>
    <alternativeName>
        <fullName evidence="2">tRNA [GM37] methyltransferase</fullName>
    </alternativeName>
    <alternativeName>
        <fullName evidence="2">tRNA methyltransferase 5 homolog</fullName>
    </alternativeName>
</protein>
<dbReference type="EC" id="2.1.1.228" evidence="2"/>
<dbReference type="EMBL" id="AK011576">
    <property type="protein sequence ID" value="BAB27710.1"/>
    <property type="molecule type" value="mRNA"/>
</dbReference>
<dbReference type="EMBL" id="BC012521">
    <property type="protein sequence ID" value="AAH12521.1"/>
    <property type="molecule type" value="mRNA"/>
</dbReference>
<dbReference type="EMBL" id="AK220389">
    <property type="protein sequence ID" value="BAD90443.1"/>
    <property type="molecule type" value="mRNA"/>
</dbReference>
<dbReference type="CCDS" id="CCDS36474.1">
    <molecule id="Q9D0C4-1"/>
</dbReference>
<dbReference type="RefSeq" id="NP_083856.1">
    <molecule id="Q9D0C4-1"/>
    <property type="nucleotide sequence ID" value="NM_029580.4"/>
</dbReference>
<dbReference type="SMR" id="Q9D0C4"/>
<dbReference type="BioGRID" id="218076">
    <property type="interactions" value="1"/>
</dbReference>
<dbReference type="FunCoup" id="Q9D0C4">
    <property type="interactions" value="2553"/>
</dbReference>
<dbReference type="STRING" id="10090.ENSMUSP00000112121"/>
<dbReference type="iPTMnet" id="Q9D0C4"/>
<dbReference type="PhosphoSitePlus" id="Q9D0C4"/>
<dbReference type="SwissPalm" id="Q9D0C4"/>
<dbReference type="PaxDb" id="10090-ENSMUSP00000112121"/>
<dbReference type="PeptideAtlas" id="Q9D0C4"/>
<dbReference type="ProteomicsDB" id="258982">
    <molecule id="Q9D0C4-1"/>
</dbReference>
<dbReference type="ProteomicsDB" id="258983">
    <molecule id="Q9D0C4-2"/>
</dbReference>
<dbReference type="Pumba" id="Q9D0C4"/>
<dbReference type="Antibodypedia" id="85">
    <property type="antibodies" value="70 antibodies from 20 providers"/>
</dbReference>
<dbReference type="DNASU" id="76357"/>
<dbReference type="Ensembl" id="ENSMUST00000116420.4">
    <molecule id="Q9D0C4-1"/>
    <property type="protein sequence ID" value="ENSMUSP00000112121.3"/>
    <property type="gene ID" value="ENSMUSG00000034442.12"/>
</dbReference>
<dbReference type="GeneID" id="76357"/>
<dbReference type="KEGG" id="mmu:76357"/>
<dbReference type="UCSC" id="uc007nwf.1">
    <molecule id="Q9D0C4-2"/>
    <property type="organism name" value="mouse"/>
</dbReference>
<dbReference type="UCSC" id="uc007nwg.1">
    <molecule id="Q9D0C4-1"/>
    <property type="organism name" value="mouse"/>
</dbReference>
<dbReference type="AGR" id="MGI:1923607"/>
<dbReference type="CTD" id="57570"/>
<dbReference type="MGI" id="MGI:1923607">
    <property type="gene designation" value="Trmt5"/>
</dbReference>
<dbReference type="VEuPathDB" id="HostDB:ENSMUSG00000034442"/>
<dbReference type="eggNOG" id="KOG2078">
    <property type="taxonomic scope" value="Eukaryota"/>
</dbReference>
<dbReference type="GeneTree" id="ENSGT00940000153304"/>
<dbReference type="HOGENOM" id="CLU_022610_2_3_1"/>
<dbReference type="InParanoid" id="Q9D0C4"/>
<dbReference type="OMA" id="VGSHSQF"/>
<dbReference type="OrthoDB" id="408788at2759"/>
<dbReference type="PhylomeDB" id="Q9D0C4"/>
<dbReference type="TreeFam" id="TF315073"/>
<dbReference type="BioGRID-ORCS" id="76357">
    <property type="hits" value="25 hits in 80 CRISPR screens"/>
</dbReference>
<dbReference type="ChiTaRS" id="Trmt5">
    <property type="organism name" value="mouse"/>
</dbReference>
<dbReference type="PRO" id="PR:Q9D0C4"/>
<dbReference type="Proteomes" id="UP000000589">
    <property type="component" value="Chromosome 12"/>
</dbReference>
<dbReference type="RNAct" id="Q9D0C4">
    <property type="molecule type" value="protein"/>
</dbReference>
<dbReference type="Bgee" id="ENSMUSG00000034442">
    <property type="expression patterns" value="Expressed in spermatocyte and 233 other cell types or tissues"/>
</dbReference>
<dbReference type="ExpressionAtlas" id="Q9D0C4">
    <property type="expression patterns" value="baseline and differential"/>
</dbReference>
<dbReference type="GO" id="GO:0005759">
    <property type="term" value="C:mitochondrial matrix"/>
    <property type="evidence" value="ECO:0000250"/>
    <property type="project" value="UniProtKB"/>
</dbReference>
<dbReference type="GO" id="GO:0005634">
    <property type="term" value="C:nucleus"/>
    <property type="evidence" value="ECO:0007669"/>
    <property type="project" value="UniProtKB-SubCell"/>
</dbReference>
<dbReference type="GO" id="GO:0052906">
    <property type="term" value="F:tRNA (guanine(37)-N1)-methyltransferase activity"/>
    <property type="evidence" value="ECO:0007669"/>
    <property type="project" value="UniProtKB-UniRule"/>
</dbReference>
<dbReference type="GO" id="GO:0070901">
    <property type="term" value="P:mitochondrial tRNA methylation"/>
    <property type="evidence" value="ECO:0000250"/>
    <property type="project" value="UniProtKB"/>
</dbReference>
<dbReference type="FunFam" id="3.30.300.110:FF:000001">
    <property type="entry name" value="tRNA (guanine(37)-N1)-methyltransferase"/>
    <property type="match status" value="1"/>
</dbReference>
<dbReference type="FunFam" id="3.40.50.150:FF:000102">
    <property type="entry name" value="tRNA (guanine(37)-N1)-methyltransferase"/>
    <property type="match status" value="1"/>
</dbReference>
<dbReference type="Gene3D" id="3.30.300.110">
    <property type="entry name" value="Met-10+ protein-like domains"/>
    <property type="match status" value="1"/>
</dbReference>
<dbReference type="Gene3D" id="3.40.50.150">
    <property type="entry name" value="Vaccinia Virus protein VP39"/>
    <property type="match status" value="1"/>
</dbReference>
<dbReference type="HAMAP" id="MF_03152">
    <property type="entry name" value="TRM5"/>
    <property type="match status" value="1"/>
</dbReference>
<dbReference type="InterPro" id="IPR030382">
    <property type="entry name" value="MeTrfase_TRM5/TYW2"/>
</dbReference>
<dbReference type="InterPro" id="IPR029063">
    <property type="entry name" value="SAM-dependent_MTases_sf"/>
</dbReference>
<dbReference type="InterPro" id="IPR056743">
    <property type="entry name" value="TRM5-TYW2-like_MTfase"/>
</dbReference>
<dbReference type="InterPro" id="IPR056744">
    <property type="entry name" value="TRM5/TYW2-like_N"/>
</dbReference>
<dbReference type="InterPro" id="IPR025792">
    <property type="entry name" value="tRNA_Gua_MeTrfase_euk"/>
</dbReference>
<dbReference type="PANTHER" id="PTHR23245:SF36">
    <property type="entry name" value="TRNA (GUANINE(37)-N1)-METHYLTRANSFERASE"/>
    <property type="match status" value="1"/>
</dbReference>
<dbReference type="PANTHER" id="PTHR23245">
    <property type="entry name" value="TRNA METHYLTRANSFERASE"/>
    <property type="match status" value="1"/>
</dbReference>
<dbReference type="Pfam" id="PF02475">
    <property type="entry name" value="TRM5-TYW2_MTfase"/>
    <property type="match status" value="1"/>
</dbReference>
<dbReference type="Pfam" id="PF25133">
    <property type="entry name" value="TYW2_N_2"/>
    <property type="match status" value="1"/>
</dbReference>
<dbReference type="SUPFAM" id="SSF53335">
    <property type="entry name" value="S-adenosyl-L-methionine-dependent methyltransferases"/>
    <property type="match status" value="1"/>
</dbReference>
<dbReference type="PROSITE" id="PS51684">
    <property type="entry name" value="SAM_MT_TRM5_TYW2"/>
    <property type="match status" value="1"/>
</dbReference>
<proteinExistence type="evidence at protein level"/>
<sequence length="501" mass="56794">MRIVWKLFGFSRRLLQVEWCHPSESILLFTLVPRLRKAPSVFLLGQRQGLSTMPEIEASVRDSELFSPPSDVRGMRELDRTAFKKTVSIPVLKARKEVVNRLMRALRRVALQRPGIKRVIEDPKDEDSRLIMLDPYRMLTADSFDKAELGVLKELDVSPQLSQYNLELTYENFKSEEILKAVLPEGQDVTSGFSRVGHIAHLNLRDHQLPFKHLIGQVMVDKNPGITSAVNKTSNIDNTYRNFQMEVLCGEENMLTKVRENNYTYEFDFSKVYWNPRLSTEHGRITELLNPGDVLFDVFAGVGPFAIPAARKNCTVFANDLNPESHKWLLHNCKLNKVDQKVKVFNMDGKDFIQGPVREELMLRLGLSAEAKPSVHIVMNLPAKAIEFLSVFRSLLDGQPCSTELLPTVHCYCFSKDSDPAKDVRQQAEAVLGVSLETSSSVHLVRNVAPNKEMLCITFQIPTATLYRNQSLSLQNDQEPPLKRQKTGDPFSGEPQIASDS</sequence>
<feature type="chain" id="PRO_0000256515" description="tRNA (guanine(37)-N(1))-methyltransferase">
    <location>
        <begin position="1"/>
        <end position="501"/>
    </location>
</feature>
<feature type="region of interest" description="Disordered" evidence="3">
    <location>
        <begin position="474"/>
        <end position="501"/>
    </location>
</feature>
<feature type="binding site" evidence="2">
    <location>
        <position position="282"/>
    </location>
    <ligand>
        <name>S-adenosyl-L-methionine</name>
        <dbReference type="ChEBI" id="CHEBI:59789"/>
    </ligand>
</feature>
<feature type="binding site" evidence="2">
    <location>
        <begin position="320"/>
        <end position="321"/>
    </location>
    <ligand>
        <name>S-adenosyl-L-methionine</name>
        <dbReference type="ChEBI" id="CHEBI:59789"/>
    </ligand>
</feature>
<feature type="binding site" evidence="2">
    <location>
        <begin position="348"/>
        <end position="349"/>
    </location>
    <ligand>
        <name>S-adenosyl-L-methionine</name>
        <dbReference type="ChEBI" id="CHEBI:59789"/>
    </ligand>
</feature>
<feature type="binding site" evidence="2">
    <location>
        <position position="380"/>
    </location>
    <ligand>
        <name>S-adenosyl-L-methionine</name>
        <dbReference type="ChEBI" id="CHEBI:59789"/>
    </ligand>
</feature>
<feature type="splice variant" id="VSP_021355" description="In isoform 2." evidence="4">
    <original>QNDQEPPLKRQKTGDPFSGEPQIASDS</original>
    <variation>REFFTMKCGVYYP</variation>
    <location>
        <begin position="475"/>
        <end position="501"/>
    </location>
</feature>
<feature type="sequence conflict" description="In Ref. 3; BAD90443." evidence="5" ref="3">
    <original>K</original>
    <variation>Q</variation>
    <location>
        <position position="334"/>
    </location>
</feature>
<comment type="function">
    <text evidence="1 2">Involved in mitochondrial tRNA methylation (By similarity). Specifically methylates the N1 position of guanosine-37 in various tRNAs. Methylation is not dependent on the nature of the nucleoside 5' of the target nucleoside. This is the first step in the biosynthesis of wybutosine (yW), a modified base adjacent to the anticodon of tRNAs and required for accurate decoding.</text>
</comment>
<comment type="catalytic activity">
    <reaction evidence="2">
        <text>guanosine(37) in tRNA + S-adenosyl-L-methionine = N(1)-methylguanosine(37) in tRNA + S-adenosyl-L-homocysteine + H(+)</text>
        <dbReference type="Rhea" id="RHEA:36899"/>
        <dbReference type="Rhea" id="RHEA-COMP:10145"/>
        <dbReference type="Rhea" id="RHEA-COMP:10147"/>
        <dbReference type="ChEBI" id="CHEBI:15378"/>
        <dbReference type="ChEBI" id="CHEBI:57856"/>
        <dbReference type="ChEBI" id="CHEBI:59789"/>
        <dbReference type="ChEBI" id="CHEBI:73542"/>
        <dbReference type="ChEBI" id="CHEBI:74269"/>
        <dbReference type="EC" id="2.1.1.228"/>
    </reaction>
</comment>
<comment type="subunit">
    <text evidence="2">Monomer.</text>
</comment>
<comment type="subcellular location">
    <subcellularLocation>
        <location evidence="2">Mitochondrion matrix</location>
    </subcellularLocation>
    <subcellularLocation>
        <location evidence="2">Nucleus</location>
    </subcellularLocation>
    <subcellularLocation>
        <location evidence="2">Cytoplasm</location>
    </subcellularLocation>
    <text evidence="2">Predominantly in the mitochondria and in the nucleus.</text>
</comment>
<comment type="alternative products">
    <event type="alternative splicing"/>
    <isoform>
        <id>Q9D0C4-1</id>
        <name>1</name>
        <sequence type="displayed"/>
    </isoform>
    <isoform>
        <id>Q9D0C4-2</id>
        <name>2</name>
        <sequence type="described" ref="VSP_021355"/>
    </isoform>
</comment>
<comment type="similarity">
    <text evidence="5">Belongs to the class I-like SAM-binding methyltransferase superfamily. TRM5/TYW2 family.</text>
</comment>
<evidence type="ECO:0000250" key="1">
    <source>
        <dbReference type="UniProtKB" id="Q32P41"/>
    </source>
</evidence>
<evidence type="ECO:0000255" key="2">
    <source>
        <dbReference type="HAMAP-Rule" id="MF_03152"/>
    </source>
</evidence>
<evidence type="ECO:0000256" key="3">
    <source>
        <dbReference type="SAM" id="MobiDB-lite"/>
    </source>
</evidence>
<evidence type="ECO:0000303" key="4">
    <source ref="3"/>
</evidence>
<evidence type="ECO:0000305" key="5"/>
<keyword id="KW-0025">Alternative splicing</keyword>
<keyword id="KW-0963">Cytoplasm</keyword>
<keyword id="KW-0489">Methyltransferase</keyword>
<keyword id="KW-0496">Mitochondrion</keyword>
<keyword id="KW-0539">Nucleus</keyword>
<keyword id="KW-1185">Reference proteome</keyword>
<keyword id="KW-0949">S-adenosyl-L-methionine</keyword>
<keyword id="KW-0808">Transferase</keyword>
<keyword id="KW-0819">tRNA processing</keyword>
<reference key="1">
    <citation type="journal article" date="2005" name="Science">
        <title>The transcriptional landscape of the mammalian genome.</title>
        <authorList>
            <person name="Carninci P."/>
            <person name="Kasukawa T."/>
            <person name="Katayama S."/>
            <person name="Gough J."/>
            <person name="Frith M.C."/>
            <person name="Maeda N."/>
            <person name="Oyama R."/>
            <person name="Ravasi T."/>
            <person name="Lenhard B."/>
            <person name="Wells C."/>
            <person name="Kodzius R."/>
            <person name="Shimokawa K."/>
            <person name="Bajic V.B."/>
            <person name="Brenner S.E."/>
            <person name="Batalov S."/>
            <person name="Forrest A.R."/>
            <person name="Zavolan M."/>
            <person name="Davis M.J."/>
            <person name="Wilming L.G."/>
            <person name="Aidinis V."/>
            <person name="Allen J.E."/>
            <person name="Ambesi-Impiombato A."/>
            <person name="Apweiler R."/>
            <person name="Aturaliya R.N."/>
            <person name="Bailey T.L."/>
            <person name="Bansal M."/>
            <person name="Baxter L."/>
            <person name="Beisel K.W."/>
            <person name="Bersano T."/>
            <person name="Bono H."/>
            <person name="Chalk A.M."/>
            <person name="Chiu K.P."/>
            <person name="Choudhary V."/>
            <person name="Christoffels A."/>
            <person name="Clutterbuck D.R."/>
            <person name="Crowe M.L."/>
            <person name="Dalla E."/>
            <person name="Dalrymple B.P."/>
            <person name="de Bono B."/>
            <person name="Della Gatta G."/>
            <person name="di Bernardo D."/>
            <person name="Down T."/>
            <person name="Engstrom P."/>
            <person name="Fagiolini M."/>
            <person name="Faulkner G."/>
            <person name="Fletcher C.F."/>
            <person name="Fukushima T."/>
            <person name="Furuno M."/>
            <person name="Futaki S."/>
            <person name="Gariboldi M."/>
            <person name="Georgii-Hemming P."/>
            <person name="Gingeras T.R."/>
            <person name="Gojobori T."/>
            <person name="Green R.E."/>
            <person name="Gustincich S."/>
            <person name="Harbers M."/>
            <person name="Hayashi Y."/>
            <person name="Hensch T.K."/>
            <person name="Hirokawa N."/>
            <person name="Hill D."/>
            <person name="Huminiecki L."/>
            <person name="Iacono M."/>
            <person name="Ikeo K."/>
            <person name="Iwama A."/>
            <person name="Ishikawa T."/>
            <person name="Jakt M."/>
            <person name="Kanapin A."/>
            <person name="Katoh M."/>
            <person name="Kawasawa Y."/>
            <person name="Kelso J."/>
            <person name="Kitamura H."/>
            <person name="Kitano H."/>
            <person name="Kollias G."/>
            <person name="Krishnan S.P."/>
            <person name="Kruger A."/>
            <person name="Kummerfeld S.K."/>
            <person name="Kurochkin I.V."/>
            <person name="Lareau L.F."/>
            <person name="Lazarevic D."/>
            <person name="Lipovich L."/>
            <person name="Liu J."/>
            <person name="Liuni S."/>
            <person name="McWilliam S."/>
            <person name="Madan Babu M."/>
            <person name="Madera M."/>
            <person name="Marchionni L."/>
            <person name="Matsuda H."/>
            <person name="Matsuzawa S."/>
            <person name="Miki H."/>
            <person name="Mignone F."/>
            <person name="Miyake S."/>
            <person name="Morris K."/>
            <person name="Mottagui-Tabar S."/>
            <person name="Mulder N."/>
            <person name="Nakano N."/>
            <person name="Nakauchi H."/>
            <person name="Ng P."/>
            <person name="Nilsson R."/>
            <person name="Nishiguchi S."/>
            <person name="Nishikawa S."/>
            <person name="Nori F."/>
            <person name="Ohara O."/>
            <person name="Okazaki Y."/>
            <person name="Orlando V."/>
            <person name="Pang K.C."/>
            <person name="Pavan W.J."/>
            <person name="Pavesi G."/>
            <person name="Pesole G."/>
            <person name="Petrovsky N."/>
            <person name="Piazza S."/>
            <person name="Reed J."/>
            <person name="Reid J.F."/>
            <person name="Ring B.Z."/>
            <person name="Ringwald M."/>
            <person name="Rost B."/>
            <person name="Ruan Y."/>
            <person name="Salzberg S.L."/>
            <person name="Sandelin A."/>
            <person name="Schneider C."/>
            <person name="Schoenbach C."/>
            <person name="Sekiguchi K."/>
            <person name="Semple C.A."/>
            <person name="Seno S."/>
            <person name="Sessa L."/>
            <person name="Sheng Y."/>
            <person name="Shibata Y."/>
            <person name="Shimada H."/>
            <person name="Shimada K."/>
            <person name="Silva D."/>
            <person name="Sinclair B."/>
            <person name="Sperling S."/>
            <person name="Stupka E."/>
            <person name="Sugiura K."/>
            <person name="Sultana R."/>
            <person name="Takenaka Y."/>
            <person name="Taki K."/>
            <person name="Tammoja K."/>
            <person name="Tan S.L."/>
            <person name="Tang S."/>
            <person name="Taylor M.S."/>
            <person name="Tegner J."/>
            <person name="Teichmann S.A."/>
            <person name="Ueda H.R."/>
            <person name="van Nimwegen E."/>
            <person name="Verardo R."/>
            <person name="Wei C.L."/>
            <person name="Yagi K."/>
            <person name="Yamanishi H."/>
            <person name="Zabarovsky E."/>
            <person name="Zhu S."/>
            <person name="Zimmer A."/>
            <person name="Hide W."/>
            <person name="Bult C."/>
            <person name="Grimmond S.M."/>
            <person name="Teasdale R.D."/>
            <person name="Liu E.T."/>
            <person name="Brusic V."/>
            <person name="Quackenbush J."/>
            <person name="Wahlestedt C."/>
            <person name="Mattick J.S."/>
            <person name="Hume D.A."/>
            <person name="Kai C."/>
            <person name="Sasaki D."/>
            <person name="Tomaru Y."/>
            <person name="Fukuda S."/>
            <person name="Kanamori-Katayama M."/>
            <person name="Suzuki M."/>
            <person name="Aoki J."/>
            <person name="Arakawa T."/>
            <person name="Iida J."/>
            <person name="Imamura K."/>
            <person name="Itoh M."/>
            <person name="Kato T."/>
            <person name="Kawaji H."/>
            <person name="Kawagashira N."/>
            <person name="Kawashima T."/>
            <person name="Kojima M."/>
            <person name="Kondo S."/>
            <person name="Konno H."/>
            <person name="Nakano K."/>
            <person name="Ninomiya N."/>
            <person name="Nishio T."/>
            <person name="Okada M."/>
            <person name="Plessy C."/>
            <person name="Shibata K."/>
            <person name="Shiraki T."/>
            <person name="Suzuki S."/>
            <person name="Tagami M."/>
            <person name="Waki K."/>
            <person name="Watahiki A."/>
            <person name="Okamura-Oho Y."/>
            <person name="Suzuki H."/>
            <person name="Kawai J."/>
            <person name="Hayashizaki Y."/>
        </authorList>
    </citation>
    <scope>NUCLEOTIDE SEQUENCE [LARGE SCALE MRNA] (ISOFORM 1)</scope>
    <source>
        <strain>C57BL/6J</strain>
    </source>
</reference>
<reference key="2">
    <citation type="journal article" date="2004" name="Genome Res.">
        <title>The status, quality, and expansion of the NIH full-length cDNA project: the Mammalian Gene Collection (MGC).</title>
        <authorList>
            <consortium name="The MGC Project Team"/>
        </authorList>
    </citation>
    <scope>NUCLEOTIDE SEQUENCE [LARGE SCALE MRNA] (ISOFORM 1)</scope>
    <source>
        <strain>FVB/N</strain>
        <tissue>Mammary tumor</tissue>
    </source>
</reference>
<reference key="3">
    <citation type="submission" date="2005-02" db="EMBL/GenBank/DDBJ databases">
        <title>Prediction of the coding sequences of mouse homologues of KIAA gene. The complete nucleotide sequences of mouse KIAA-homologous cDNAs identified by screening of terminal sequences of cDNA clones randomly sampled from size-fractionated libraries.</title>
        <authorList>
            <person name="Okazaki N."/>
            <person name="Kikuno R.F."/>
            <person name="Ohara R."/>
            <person name="Inamoto S."/>
            <person name="Nagase T."/>
            <person name="Ohara O."/>
            <person name="Koga H."/>
        </authorList>
    </citation>
    <scope>NUCLEOTIDE SEQUENCE [LARGE SCALE MRNA] OF 78-501 (ISOFORM 2)</scope>
    <source>
        <tissue>Fetal brain</tissue>
    </source>
</reference>
<reference key="4">
    <citation type="journal article" date="2010" name="Cell">
        <title>A tissue-specific atlas of mouse protein phosphorylation and expression.</title>
        <authorList>
            <person name="Huttlin E.L."/>
            <person name="Jedrychowski M.P."/>
            <person name="Elias J.E."/>
            <person name="Goswami T."/>
            <person name="Rad R."/>
            <person name="Beausoleil S.A."/>
            <person name="Villen J."/>
            <person name="Haas W."/>
            <person name="Sowa M.E."/>
            <person name="Gygi S.P."/>
        </authorList>
    </citation>
    <scope>IDENTIFICATION BY MASS SPECTROMETRY [LARGE SCALE ANALYSIS]</scope>
    <source>
        <tissue>Spleen</tissue>
        <tissue>Testis</tissue>
    </source>
</reference>
<name>TRM5_MOUSE</name>